<organism>
    <name type="scientific">Gorilla gorilla gorilla</name>
    <name type="common">Western lowland gorilla</name>
    <dbReference type="NCBI Taxonomy" id="9595"/>
    <lineage>
        <taxon>Eukaryota</taxon>
        <taxon>Metazoa</taxon>
        <taxon>Chordata</taxon>
        <taxon>Craniata</taxon>
        <taxon>Vertebrata</taxon>
        <taxon>Euteleostomi</taxon>
        <taxon>Mammalia</taxon>
        <taxon>Eutheria</taxon>
        <taxon>Euarchontoglires</taxon>
        <taxon>Primates</taxon>
        <taxon>Haplorrhini</taxon>
        <taxon>Catarrhini</taxon>
        <taxon>Hominidae</taxon>
        <taxon>Gorilla</taxon>
    </lineage>
</organism>
<protein>
    <recommendedName>
        <fullName evidence="1">DNA dC-&gt;dU-editing enzyme APOBEC-3G</fullName>
        <ecNumber evidence="1">3.5.4.38</ecNumber>
    </recommendedName>
    <alternativeName>
        <fullName>Deoxycytidine deaminase</fullName>
    </alternativeName>
</protein>
<feature type="chain" id="PRO_0000171760" description="DNA dC-&gt;dU-editing enzyme APOBEC-3G">
    <location>
        <begin position="1"/>
        <end position="384"/>
    </location>
</feature>
<feature type="domain" description="CMP/dCMP-type deaminase 1" evidence="2">
    <location>
        <begin position="29"/>
        <end position="138"/>
    </location>
</feature>
<feature type="domain" description="CMP/dCMP-type deaminase 2" evidence="2">
    <location>
        <begin position="214"/>
        <end position="328"/>
    </location>
</feature>
<feature type="region of interest" description="Essential for cytoplasmic localization" evidence="3">
    <location>
        <begin position="1"/>
        <end position="60"/>
    </location>
</feature>
<feature type="region of interest" description="Necessary for homooligomerization" evidence="3">
    <location>
        <begin position="209"/>
        <end position="336"/>
    </location>
</feature>
<feature type="region of interest" description="Interaction with DNA" evidence="3">
    <location>
        <begin position="213"/>
        <end position="215"/>
    </location>
</feature>
<feature type="region of interest" description="Interaction with DNA" evidence="3">
    <location>
        <begin position="313"/>
        <end position="320"/>
    </location>
</feature>
<feature type="active site" description="Proton donor" evidence="2">
    <location>
        <position position="259"/>
    </location>
</feature>
<feature type="binding site" evidence="2">
    <location>
        <position position="65"/>
    </location>
    <ligand>
        <name>Zn(2+)</name>
        <dbReference type="ChEBI" id="CHEBI:29105"/>
        <label>1</label>
    </ligand>
</feature>
<feature type="binding site" evidence="2">
    <location>
        <position position="97"/>
    </location>
    <ligand>
        <name>Zn(2+)</name>
        <dbReference type="ChEBI" id="CHEBI:29105"/>
        <label>1</label>
    </ligand>
</feature>
<feature type="binding site" evidence="2">
    <location>
        <position position="100"/>
    </location>
    <ligand>
        <name>Zn(2+)</name>
        <dbReference type="ChEBI" id="CHEBI:29105"/>
        <label>1</label>
    </ligand>
</feature>
<feature type="binding site" evidence="1">
    <location>
        <position position="257"/>
    </location>
    <ligand>
        <name>Zn(2+)</name>
        <dbReference type="ChEBI" id="CHEBI:29105"/>
        <label>2</label>
        <note>catalytic</note>
    </ligand>
</feature>
<feature type="binding site" evidence="1">
    <location>
        <position position="288"/>
    </location>
    <ligand>
        <name>Zn(2+)</name>
        <dbReference type="ChEBI" id="CHEBI:29105"/>
        <label>2</label>
        <note>catalytic</note>
    </ligand>
</feature>
<feature type="binding site" evidence="1">
    <location>
        <position position="291"/>
    </location>
    <ligand>
        <name>Zn(2+)</name>
        <dbReference type="ChEBI" id="CHEBI:29105"/>
        <label>2</label>
        <note>catalytic</note>
    </ligand>
</feature>
<feature type="site" description="Interaction with DNA" evidence="3">
    <location>
        <position position="244"/>
    </location>
</feature>
<feature type="modified residue" description="Phosphothreonine; by PKA" evidence="1">
    <location>
        <position position="32"/>
    </location>
</feature>
<feature type="modified residue" description="Phosphothreonine; by PKA and CAMK2" evidence="1">
    <location>
        <position position="218"/>
    </location>
</feature>
<feature type="sequence conflict" description="In Ref. 1; AAT72157." evidence="3" ref="1">
    <original>P</original>
    <variation>S</variation>
    <location>
        <position position="3"/>
    </location>
</feature>
<feature type="sequence conflict" description="In Ref. 1; AAT72157." evidence="3" ref="1">
    <original>L</original>
    <variation>F</variation>
    <location>
        <position position="62"/>
    </location>
</feature>
<feature type="sequence conflict" description="In Ref. 1; AAT72157." evidence="3" ref="1">
    <original>Y</original>
    <variation>D</variation>
    <location>
        <position position="352"/>
    </location>
</feature>
<accession>Q694C1</accession>
<accession>Q6DVQ0</accession>
<gene>
    <name type="primary">APOBEC3G</name>
</gene>
<sequence length="384" mass="46269">MTPQFRNTVERMYRDTFSYNFNNRPILSRRNTVWLCYEVKTKDPSRPPLDAKIFRGQVYSELKYHPEMRFFHWFSKWRKLHRDQEYEVTWYISWSPCTKCTRNVATFLAEDPKVTLTIFVARLYYFWDQDYQEALRSLCQKRDGPRATMKIMNYDEFQHCWSKFVYSQRELFEPWNNLPKYYMLLHIMLGEILRHSMDPPTFTSNFNNEHWVRGRHETYLCYEVERLHNDTWVLLNQRRGFLCNQAPHKHGFLEGRHAELCFLDVIPFWKLDLHQDYRVTCFTSWSPCFSCAQEMAKFISNKKHVSLCIFAARIYDDQGRCQEGLRTLAEAGAKISIMTYSEFKHCWDTFVYHQGCPFQPWDGLEEHSQALSGRLQAILQNQGN</sequence>
<proteinExistence type="evidence at transcript level"/>
<keyword id="KW-0051">Antiviral defense</keyword>
<keyword id="KW-0963">Cytoplasm</keyword>
<keyword id="KW-0378">Hydrolase</keyword>
<keyword id="KW-0391">Immunity</keyword>
<keyword id="KW-0399">Innate immunity</keyword>
<keyword id="KW-0479">Metal-binding</keyword>
<keyword id="KW-0539">Nucleus</keyword>
<keyword id="KW-0597">Phosphoprotein</keyword>
<keyword id="KW-1185">Reference proteome</keyword>
<keyword id="KW-0677">Repeat</keyword>
<keyword id="KW-0862">Zinc</keyword>
<dbReference type="EC" id="3.5.4.38" evidence="1"/>
<dbReference type="EMBL" id="AY639868">
    <property type="protein sequence ID" value="AAT72157.1"/>
    <property type="molecule type" value="mRNA"/>
</dbReference>
<dbReference type="EMBL" id="AY622553">
    <property type="protein sequence ID" value="AAT44394.1"/>
    <property type="molecule type" value="Genomic_DNA"/>
</dbReference>
<dbReference type="EMBL" id="AY622546">
    <property type="protein sequence ID" value="AAT44394.1"/>
    <property type="status" value="JOINED"/>
    <property type="molecule type" value="Genomic_DNA"/>
</dbReference>
<dbReference type="EMBL" id="AY622547">
    <property type="protein sequence ID" value="AAT44394.1"/>
    <property type="status" value="JOINED"/>
    <property type="molecule type" value="Genomic_DNA"/>
</dbReference>
<dbReference type="EMBL" id="AY622548">
    <property type="protein sequence ID" value="AAT44394.1"/>
    <property type="status" value="JOINED"/>
    <property type="molecule type" value="Genomic_DNA"/>
</dbReference>
<dbReference type="EMBL" id="AY622549">
    <property type="protein sequence ID" value="AAT44394.1"/>
    <property type="status" value="JOINED"/>
    <property type="molecule type" value="Genomic_DNA"/>
</dbReference>
<dbReference type="EMBL" id="AY622550">
    <property type="protein sequence ID" value="AAT44394.1"/>
    <property type="status" value="JOINED"/>
    <property type="molecule type" value="Genomic_DNA"/>
</dbReference>
<dbReference type="EMBL" id="AY622551">
    <property type="protein sequence ID" value="AAT44394.1"/>
    <property type="status" value="JOINED"/>
    <property type="molecule type" value="Genomic_DNA"/>
</dbReference>
<dbReference type="EMBL" id="AY622552">
    <property type="protein sequence ID" value="AAT44394.1"/>
    <property type="status" value="JOINED"/>
    <property type="molecule type" value="Genomic_DNA"/>
</dbReference>
<dbReference type="SMR" id="Q694C1"/>
<dbReference type="FunCoup" id="Q694C1">
    <property type="interactions" value="65"/>
</dbReference>
<dbReference type="STRING" id="9593.ENSGGOP00000021965"/>
<dbReference type="eggNOG" id="KOG4075">
    <property type="taxonomic scope" value="Eukaryota"/>
</dbReference>
<dbReference type="InParanoid" id="Q694C1"/>
<dbReference type="Proteomes" id="UP000001519">
    <property type="component" value="Unplaced"/>
</dbReference>
<dbReference type="GO" id="GO:0005737">
    <property type="term" value="C:cytoplasm"/>
    <property type="evidence" value="ECO:0000250"/>
    <property type="project" value="UniProtKB"/>
</dbReference>
<dbReference type="GO" id="GO:0005634">
    <property type="term" value="C:nucleus"/>
    <property type="evidence" value="ECO:0000318"/>
    <property type="project" value="GO_Central"/>
</dbReference>
<dbReference type="GO" id="GO:0000932">
    <property type="term" value="C:P-body"/>
    <property type="evidence" value="ECO:0000250"/>
    <property type="project" value="UniProtKB"/>
</dbReference>
<dbReference type="GO" id="GO:1990904">
    <property type="term" value="C:ribonucleoprotein complex"/>
    <property type="evidence" value="ECO:0000250"/>
    <property type="project" value="UniProtKB"/>
</dbReference>
<dbReference type="GO" id="GO:0004126">
    <property type="term" value="F:cytidine deaminase activity"/>
    <property type="evidence" value="ECO:0000250"/>
    <property type="project" value="UniProtKB"/>
</dbReference>
<dbReference type="GO" id="GO:0003723">
    <property type="term" value="F:RNA binding"/>
    <property type="evidence" value="ECO:0000318"/>
    <property type="project" value="GO_Central"/>
</dbReference>
<dbReference type="GO" id="GO:0008270">
    <property type="term" value="F:zinc ion binding"/>
    <property type="evidence" value="ECO:0007669"/>
    <property type="project" value="InterPro"/>
</dbReference>
<dbReference type="GO" id="GO:0009972">
    <property type="term" value="P:cytidine deamination"/>
    <property type="evidence" value="ECO:0000250"/>
    <property type="project" value="UniProtKB"/>
</dbReference>
<dbReference type="GO" id="GO:0016554">
    <property type="term" value="P:cytidine to uridine editing"/>
    <property type="evidence" value="ECO:0000318"/>
    <property type="project" value="GO_Central"/>
</dbReference>
<dbReference type="GO" id="GO:0051607">
    <property type="term" value="P:defense response to virus"/>
    <property type="evidence" value="ECO:0000250"/>
    <property type="project" value="UniProtKB"/>
</dbReference>
<dbReference type="GO" id="GO:0070383">
    <property type="term" value="P:DNA cytosine deamination"/>
    <property type="evidence" value="ECO:0000318"/>
    <property type="project" value="GO_Central"/>
</dbReference>
<dbReference type="GO" id="GO:0045087">
    <property type="term" value="P:innate immune response"/>
    <property type="evidence" value="ECO:0007669"/>
    <property type="project" value="UniProtKB-KW"/>
</dbReference>
<dbReference type="GO" id="GO:0045869">
    <property type="term" value="P:negative regulation of single stranded viral RNA replication via double stranded DNA intermediate"/>
    <property type="evidence" value="ECO:0000318"/>
    <property type="project" value="GO_Central"/>
</dbReference>
<dbReference type="GO" id="GO:0010526">
    <property type="term" value="P:transposable element silencing"/>
    <property type="evidence" value="ECO:0000250"/>
    <property type="project" value="UniProtKB"/>
</dbReference>
<dbReference type="CDD" id="cd01283">
    <property type="entry name" value="cytidine_deaminase"/>
    <property type="match status" value="2"/>
</dbReference>
<dbReference type="FunFam" id="3.40.140.10:FF:000029">
    <property type="entry name" value="DNA dC-&gt;dU-editing enzyme APOBEC-3G"/>
    <property type="match status" value="2"/>
</dbReference>
<dbReference type="Gene3D" id="3.40.140.10">
    <property type="entry name" value="Cytidine Deaminase, domain 2"/>
    <property type="match status" value="2"/>
</dbReference>
<dbReference type="InterPro" id="IPR016192">
    <property type="entry name" value="APOBEC/CMP_deaminase_Zn-bd"/>
</dbReference>
<dbReference type="InterPro" id="IPR050610">
    <property type="entry name" value="APOBEC_Cyt_Deaminase"/>
</dbReference>
<dbReference type="InterPro" id="IPR002125">
    <property type="entry name" value="CMP_dCMP_dom"/>
</dbReference>
<dbReference type="InterPro" id="IPR016193">
    <property type="entry name" value="Cytidine_deaminase-like"/>
</dbReference>
<dbReference type="PANTHER" id="PTHR13857:SF20">
    <property type="entry name" value="DNA DC-DU-EDITING ENZYME APOBEC-3G"/>
    <property type="match status" value="1"/>
</dbReference>
<dbReference type="PANTHER" id="PTHR13857">
    <property type="entry name" value="MRNA EDITING ENZYME"/>
    <property type="match status" value="1"/>
</dbReference>
<dbReference type="Pfam" id="PF18782">
    <property type="entry name" value="NAD2"/>
    <property type="match status" value="2"/>
</dbReference>
<dbReference type="SUPFAM" id="SSF53927">
    <property type="entry name" value="Cytidine deaminase-like"/>
    <property type="match status" value="2"/>
</dbReference>
<dbReference type="PROSITE" id="PS00903">
    <property type="entry name" value="CYT_DCMP_DEAMINASES_1"/>
    <property type="match status" value="1"/>
</dbReference>
<dbReference type="PROSITE" id="PS51747">
    <property type="entry name" value="CYT_DCMP_DEAMINASES_2"/>
    <property type="match status" value="2"/>
</dbReference>
<comment type="function">
    <text evidence="1">DNA deaminase (cytidine deaminase) which acts as an inhibitor of retrovirus replication and retrotransposon mobility. After the penetration of retroviral nucleocapsids into target cells of infection and the initiation of reverse transcription, it can induce the conversion of cytosine to uracil in the minus-sense single-strand viral DNA, leading to G-to-A hypermutations in the subsequent plus-strand viral DNA. The resultant detrimental levels of mutations in the proviral genome, along with a deamination-independent mechanism that works prior to the proviral integration, together exert efficient antiretroviral effects in infected target cells. Selectively targets single-stranded DNA and does not deaminate double-stranded DNA or single- or double-stranded RNA (By similarity).</text>
</comment>
<comment type="catalytic activity">
    <reaction evidence="1">
        <text>a 2'-deoxycytidine in single-stranded DNA + H2O + H(+) = a 2'-deoxyuridine in single-stranded DNA + NH4(+)</text>
        <dbReference type="Rhea" id="RHEA:50948"/>
        <dbReference type="Rhea" id="RHEA-COMP:12846"/>
        <dbReference type="Rhea" id="RHEA-COMP:12847"/>
        <dbReference type="ChEBI" id="CHEBI:15377"/>
        <dbReference type="ChEBI" id="CHEBI:15378"/>
        <dbReference type="ChEBI" id="CHEBI:28938"/>
        <dbReference type="ChEBI" id="CHEBI:85452"/>
        <dbReference type="ChEBI" id="CHEBI:133902"/>
        <dbReference type="EC" id="3.5.4.38"/>
    </reaction>
</comment>
<comment type="cofactor">
    <cofactor evidence="1">
        <name>Zn(2+)</name>
        <dbReference type="ChEBI" id="CHEBI:29105"/>
    </cofactor>
</comment>
<comment type="subunit">
    <text evidence="1">Homodimer. Homooligomer. Can bind RNA to form ribonucleoprotein complexes of high-molecular-mass (HMM) or low-molecular-mass (LMM). HMM is inactive and heterogeneous in protein composition because of binding nonselectively to cellular RNAs, which in turn are associated with variety of cellular proteins. The LMM form which is enzymatically active has few or no RNAs associated. Its ability to form homooligomer is distinct from its ability to assemble into HMM. Interacts with APOBEC3B, APOBEC3F, MOV10, AGO2, EIF4E, EIF4ENIF1, DCP2 and DDX6 in an RNA-dependent manner. Interacts with AGO1, AGO3 and PKA/PRKACA (By similarity).</text>
</comment>
<comment type="subcellular location">
    <subcellularLocation>
        <location evidence="1">Cytoplasm</location>
    </subcellularLocation>
    <subcellularLocation>
        <location evidence="1">Nucleus</location>
    </subcellularLocation>
    <subcellularLocation>
        <location evidence="1">Cytoplasm</location>
        <location evidence="1">P-body</location>
    </subcellularLocation>
    <text evidence="1">Mainly cytoplasmic, small amount are found in the nucleus.</text>
</comment>
<comment type="domain">
    <text evidence="1">The CMP/dCMP deaminase domain 1 mediates RNA binding, RNA-dependent oligomerization and virion incorporation whereas the CMP/dCMP deaminase domain 2 confers deoxycytidine deaminase activity and substrate sequence specificity.</text>
</comment>
<comment type="similarity">
    <text evidence="3">Belongs to the cytidine and deoxycytidylate deaminase family.</text>
</comment>
<name>ABC3G_GORGO</name>
<reference key="1">
    <citation type="journal article" date="2004" name="Hum. Mol. Genet.">
        <title>Rapid evolution of primate antiviral enzyme APOBEC3G.</title>
        <authorList>
            <person name="Zhang J."/>
            <person name="Webb D.M."/>
        </authorList>
    </citation>
    <scope>NUCLEOTIDE SEQUENCE [MRNA]</scope>
</reference>
<reference key="2">
    <citation type="journal article" date="2004" name="PLoS Biol.">
        <title>Ancient adaptive evolution of the primate antiviral DNA-editing enzyme APOBEC3G.</title>
        <authorList>
            <person name="Sawyer S.L."/>
            <person name="Emerman M."/>
            <person name="Malik H.S."/>
        </authorList>
    </citation>
    <scope>NUCLEOTIDE SEQUENCE [GENOMIC DNA]</scope>
</reference>
<evidence type="ECO:0000250" key="1">
    <source>
        <dbReference type="UniProtKB" id="Q9HC16"/>
    </source>
</evidence>
<evidence type="ECO:0000255" key="2">
    <source>
        <dbReference type="PROSITE-ProRule" id="PRU01083"/>
    </source>
</evidence>
<evidence type="ECO:0000305" key="3"/>